<proteinExistence type="inferred from homology"/>
<keyword id="KW-0028">Amino-acid biosynthesis</keyword>
<keyword id="KW-0963">Cytoplasm</keyword>
<keyword id="KW-0220">Diaminopimelate biosynthesis</keyword>
<keyword id="KW-0456">Lyase</keyword>
<keyword id="KW-0457">Lysine biosynthesis</keyword>
<keyword id="KW-0704">Schiff base</keyword>
<accession>B2RMB9</accession>
<feature type="chain" id="PRO_1000124057" description="4-hydroxy-tetrahydrodipicolinate synthase">
    <location>
        <begin position="1"/>
        <end position="297"/>
    </location>
</feature>
<feature type="active site" description="Proton donor/acceptor" evidence="1">
    <location>
        <position position="137"/>
    </location>
</feature>
<feature type="active site" description="Schiff-base intermediate with substrate" evidence="1">
    <location>
        <position position="166"/>
    </location>
</feature>
<feature type="binding site" evidence="1">
    <location>
        <position position="49"/>
    </location>
    <ligand>
        <name>pyruvate</name>
        <dbReference type="ChEBI" id="CHEBI:15361"/>
    </ligand>
</feature>
<feature type="binding site" evidence="1">
    <location>
        <position position="208"/>
    </location>
    <ligand>
        <name>pyruvate</name>
        <dbReference type="ChEBI" id="CHEBI:15361"/>
    </ligand>
</feature>
<feature type="site" description="Part of a proton relay during catalysis" evidence="1">
    <location>
        <position position="48"/>
    </location>
</feature>
<feature type="site" description="Part of a proton relay during catalysis" evidence="1">
    <location>
        <position position="111"/>
    </location>
</feature>
<dbReference type="EC" id="4.3.3.7" evidence="1"/>
<dbReference type="EMBL" id="AP009380">
    <property type="protein sequence ID" value="BAG34514.1"/>
    <property type="molecule type" value="Genomic_DNA"/>
</dbReference>
<dbReference type="RefSeq" id="WP_012458671.1">
    <property type="nucleotide sequence ID" value="NC_010729.1"/>
</dbReference>
<dbReference type="SMR" id="B2RMB9"/>
<dbReference type="GeneID" id="29257133"/>
<dbReference type="KEGG" id="pgn:PGN_1996"/>
<dbReference type="eggNOG" id="COG0329">
    <property type="taxonomic scope" value="Bacteria"/>
</dbReference>
<dbReference type="HOGENOM" id="CLU_049343_7_1_10"/>
<dbReference type="OrthoDB" id="9782828at2"/>
<dbReference type="BioCyc" id="PGIN431947:G1G2V-2231-MONOMER"/>
<dbReference type="UniPathway" id="UPA00034">
    <property type="reaction ID" value="UER00017"/>
</dbReference>
<dbReference type="Proteomes" id="UP000008842">
    <property type="component" value="Chromosome"/>
</dbReference>
<dbReference type="GO" id="GO:0005829">
    <property type="term" value="C:cytosol"/>
    <property type="evidence" value="ECO:0007669"/>
    <property type="project" value="TreeGrafter"/>
</dbReference>
<dbReference type="GO" id="GO:0008840">
    <property type="term" value="F:4-hydroxy-tetrahydrodipicolinate synthase activity"/>
    <property type="evidence" value="ECO:0007669"/>
    <property type="project" value="UniProtKB-UniRule"/>
</dbReference>
<dbReference type="GO" id="GO:0019877">
    <property type="term" value="P:diaminopimelate biosynthetic process"/>
    <property type="evidence" value="ECO:0007669"/>
    <property type="project" value="UniProtKB-UniRule"/>
</dbReference>
<dbReference type="GO" id="GO:0009089">
    <property type="term" value="P:lysine biosynthetic process via diaminopimelate"/>
    <property type="evidence" value="ECO:0007669"/>
    <property type="project" value="UniProtKB-UniRule"/>
</dbReference>
<dbReference type="CDD" id="cd00950">
    <property type="entry name" value="DHDPS"/>
    <property type="match status" value="1"/>
</dbReference>
<dbReference type="Gene3D" id="3.20.20.70">
    <property type="entry name" value="Aldolase class I"/>
    <property type="match status" value="1"/>
</dbReference>
<dbReference type="HAMAP" id="MF_00418">
    <property type="entry name" value="DapA"/>
    <property type="match status" value="1"/>
</dbReference>
<dbReference type="InterPro" id="IPR013785">
    <property type="entry name" value="Aldolase_TIM"/>
</dbReference>
<dbReference type="InterPro" id="IPR005263">
    <property type="entry name" value="DapA"/>
</dbReference>
<dbReference type="InterPro" id="IPR002220">
    <property type="entry name" value="DapA-like"/>
</dbReference>
<dbReference type="InterPro" id="IPR020625">
    <property type="entry name" value="Schiff_base-form_aldolases_AS"/>
</dbReference>
<dbReference type="NCBIfam" id="TIGR00674">
    <property type="entry name" value="dapA"/>
    <property type="match status" value="1"/>
</dbReference>
<dbReference type="PANTHER" id="PTHR12128:SF66">
    <property type="entry name" value="4-HYDROXY-2-OXOGLUTARATE ALDOLASE, MITOCHONDRIAL"/>
    <property type="match status" value="1"/>
</dbReference>
<dbReference type="PANTHER" id="PTHR12128">
    <property type="entry name" value="DIHYDRODIPICOLINATE SYNTHASE"/>
    <property type="match status" value="1"/>
</dbReference>
<dbReference type="Pfam" id="PF00701">
    <property type="entry name" value="DHDPS"/>
    <property type="match status" value="1"/>
</dbReference>
<dbReference type="PIRSF" id="PIRSF001365">
    <property type="entry name" value="DHDPS"/>
    <property type="match status" value="1"/>
</dbReference>
<dbReference type="PRINTS" id="PR00146">
    <property type="entry name" value="DHPICSNTHASE"/>
</dbReference>
<dbReference type="SMART" id="SM01130">
    <property type="entry name" value="DHDPS"/>
    <property type="match status" value="1"/>
</dbReference>
<dbReference type="SUPFAM" id="SSF51569">
    <property type="entry name" value="Aldolase"/>
    <property type="match status" value="1"/>
</dbReference>
<dbReference type="PROSITE" id="PS00666">
    <property type="entry name" value="DHDPS_2"/>
    <property type="match status" value="1"/>
</dbReference>
<reference key="1">
    <citation type="journal article" date="2008" name="DNA Res.">
        <title>Determination of the genome sequence of Porphyromonas gingivalis strain ATCC 33277 and genomic comparison with strain W83 revealed extensive genome rearrangements in P. gingivalis.</title>
        <authorList>
            <person name="Naito M."/>
            <person name="Hirakawa H."/>
            <person name="Yamashita A."/>
            <person name="Ohara N."/>
            <person name="Shoji M."/>
            <person name="Yukitake H."/>
            <person name="Nakayama K."/>
            <person name="Toh H."/>
            <person name="Yoshimura F."/>
            <person name="Kuhara S."/>
            <person name="Hattori M."/>
            <person name="Hayashi T."/>
            <person name="Nakayama K."/>
        </authorList>
    </citation>
    <scope>NUCLEOTIDE SEQUENCE [LARGE SCALE GENOMIC DNA]</scope>
    <source>
        <strain>ATCC 33277 / DSM 20709 / CIP 103683 / JCM 12257 / NCTC 11834 / 2561</strain>
    </source>
</reference>
<sequence length="297" mass="32617">MDRAQLRGMGVALITPFDEKGEVDHESLRLLADYQVAGGADYIVALGTTGESPTIEEAERSAILQTVREAVAGRCPIIVGAGGNYTERLVNRIQAMDKTGVDAILSVAPYYNKPTQEGIYRHYRTLAESTDTSIILYNVPGRTGVNIKSETTLRLATDCPNIIGIKEASGNVDQVRAIVLEKPDPFIVLSGDDHLSLSFIKEGAEGVISVIGNAYPELFSRLIHLCLENRFEEAETIQQRLEGMCYLMFVDGNPAGIKELLYQKGLIRHNILRLPLVSASDSTSTLIARVRNQIEQR</sequence>
<organism>
    <name type="scientific">Porphyromonas gingivalis (strain ATCC 33277 / DSM 20709 / CIP 103683 / JCM 12257 / NCTC 11834 / 2561)</name>
    <dbReference type="NCBI Taxonomy" id="431947"/>
    <lineage>
        <taxon>Bacteria</taxon>
        <taxon>Pseudomonadati</taxon>
        <taxon>Bacteroidota</taxon>
        <taxon>Bacteroidia</taxon>
        <taxon>Bacteroidales</taxon>
        <taxon>Porphyromonadaceae</taxon>
        <taxon>Porphyromonas</taxon>
    </lineage>
</organism>
<protein>
    <recommendedName>
        <fullName evidence="1">4-hydroxy-tetrahydrodipicolinate synthase</fullName>
        <shortName evidence="1">HTPA synthase</shortName>
        <ecNumber evidence="1">4.3.3.7</ecNumber>
    </recommendedName>
</protein>
<evidence type="ECO:0000255" key="1">
    <source>
        <dbReference type="HAMAP-Rule" id="MF_00418"/>
    </source>
</evidence>
<evidence type="ECO:0000305" key="2"/>
<gene>
    <name evidence="1" type="primary">dapA</name>
    <name type="ordered locus">PGN_1996</name>
</gene>
<name>DAPA_PORG3</name>
<comment type="function">
    <text evidence="1">Catalyzes the condensation of (S)-aspartate-beta-semialdehyde [(S)-ASA] and pyruvate to 4-hydroxy-tetrahydrodipicolinate (HTPA).</text>
</comment>
<comment type="catalytic activity">
    <reaction evidence="1">
        <text>L-aspartate 4-semialdehyde + pyruvate = (2S,4S)-4-hydroxy-2,3,4,5-tetrahydrodipicolinate + H2O + H(+)</text>
        <dbReference type="Rhea" id="RHEA:34171"/>
        <dbReference type="ChEBI" id="CHEBI:15361"/>
        <dbReference type="ChEBI" id="CHEBI:15377"/>
        <dbReference type="ChEBI" id="CHEBI:15378"/>
        <dbReference type="ChEBI" id="CHEBI:67139"/>
        <dbReference type="ChEBI" id="CHEBI:537519"/>
        <dbReference type="EC" id="4.3.3.7"/>
    </reaction>
</comment>
<comment type="pathway">
    <text evidence="1">Amino-acid biosynthesis; L-lysine biosynthesis via DAP pathway; (S)-tetrahydrodipicolinate from L-aspartate: step 3/4.</text>
</comment>
<comment type="subunit">
    <text evidence="1">Homotetramer; dimer of dimers.</text>
</comment>
<comment type="subcellular location">
    <subcellularLocation>
        <location evidence="1">Cytoplasm</location>
    </subcellularLocation>
</comment>
<comment type="similarity">
    <text evidence="1">Belongs to the DapA family.</text>
</comment>
<comment type="caution">
    <text evidence="2">Was originally thought to be a dihydrodipicolinate synthase (DHDPS), catalyzing the condensation of (S)-aspartate-beta-semialdehyde [(S)-ASA] and pyruvate to dihydrodipicolinate (DHDP). However, it was shown in E.coli that the product of the enzymatic reaction is not dihydrodipicolinate but in fact (4S)-4-hydroxy-2,3,4,5-tetrahydro-(2S)-dipicolinic acid (HTPA), and that the consecutive dehydration reaction leading to DHDP is not spontaneous but catalyzed by DapB.</text>
</comment>